<dbReference type="EMBL" id="CP000919">
    <property type="protein sequence ID" value="ACO18337.1"/>
    <property type="molecule type" value="Genomic_DNA"/>
</dbReference>
<dbReference type="RefSeq" id="WP_000512911.1">
    <property type="nucleotide sequence ID" value="NC_012466.1"/>
</dbReference>
<dbReference type="SMR" id="C1CC09"/>
<dbReference type="GeneID" id="93738960"/>
<dbReference type="KEGG" id="sjj:SPJ_0222"/>
<dbReference type="HOGENOM" id="CLU_036235_2_1_9"/>
<dbReference type="Proteomes" id="UP000002206">
    <property type="component" value="Chromosome"/>
</dbReference>
<dbReference type="GO" id="GO:0015934">
    <property type="term" value="C:large ribosomal subunit"/>
    <property type="evidence" value="ECO:0007669"/>
    <property type="project" value="InterPro"/>
</dbReference>
<dbReference type="GO" id="GO:0019843">
    <property type="term" value="F:rRNA binding"/>
    <property type="evidence" value="ECO:0007669"/>
    <property type="project" value="UniProtKB-UniRule"/>
</dbReference>
<dbReference type="GO" id="GO:0003735">
    <property type="term" value="F:structural constituent of ribosome"/>
    <property type="evidence" value="ECO:0007669"/>
    <property type="project" value="InterPro"/>
</dbReference>
<dbReference type="GO" id="GO:0016740">
    <property type="term" value="F:transferase activity"/>
    <property type="evidence" value="ECO:0007669"/>
    <property type="project" value="InterPro"/>
</dbReference>
<dbReference type="GO" id="GO:0002181">
    <property type="term" value="P:cytoplasmic translation"/>
    <property type="evidence" value="ECO:0007669"/>
    <property type="project" value="TreeGrafter"/>
</dbReference>
<dbReference type="FunFam" id="2.30.30.30:FF:000001">
    <property type="entry name" value="50S ribosomal protein L2"/>
    <property type="match status" value="1"/>
</dbReference>
<dbReference type="FunFam" id="2.40.50.140:FF:000003">
    <property type="entry name" value="50S ribosomal protein L2"/>
    <property type="match status" value="1"/>
</dbReference>
<dbReference type="FunFam" id="4.10.950.10:FF:000001">
    <property type="entry name" value="50S ribosomal protein L2"/>
    <property type="match status" value="1"/>
</dbReference>
<dbReference type="Gene3D" id="2.30.30.30">
    <property type="match status" value="1"/>
</dbReference>
<dbReference type="Gene3D" id="2.40.50.140">
    <property type="entry name" value="Nucleic acid-binding proteins"/>
    <property type="match status" value="1"/>
</dbReference>
<dbReference type="Gene3D" id="4.10.950.10">
    <property type="entry name" value="Ribosomal protein L2, domain 3"/>
    <property type="match status" value="1"/>
</dbReference>
<dbReference type="HAMAP" id="MF_01320_B">
    <property type="entry name" value="Ribosomal_uL2_B"/>
    <property type="match status" value="1"/>
</dbReference>
<dbReference type="InterPro" id="IPR012340">
    <property type="entry name" value="NA-bd_OB-fold"/>
</dbReference>
<dbReference type="InterPro" id="IPR014722">
    <property type="entry name" value="Rib_uL2_dom2"/>
</dbReference>
<dbReference type="InterPro" id="IPR002171">
    <property type="entry name" value="Ribosomal_uL2"/>
</dbReference>
<dbReference type="InterPro" id="IPR005880">
    <property type="entry name" value="Ribosomal_uL2_bac/org-type"/>
</dbReference>
<dbReference type="InterPro" id="IPR022669">
    <property type="entry name" value="Ribosomal_uL2_C"/>
</dbReference>
<dbReference type="InterPro" id="IPR022671">
    <property type="entry name" value="Ribosomal_uL2_CS"/>
</dbReference>
<dbReference type="InterPro" id="IPR014726">
    <property type="entry name" value="Ribosomal_uL2_dom3"/>
</dbReference>
<dbReference type="InterPro" id="IPR022666">
    <property type="entry name" value="Ribosomal_uL2_RNA-bd_dom"/>
</dbReference>
<dbReference type="InterPro" id="IPR008991">
    <property type="entry name" value="Translation_prot_SH3-like_sf"/>
</dbReference>
<dbReference type="NCBIfam" id="TIGR01171">
    <property type="entry name" value="rplB_bact"/>
    <property type="match status" value="1"/>
</dbReference>
<dbReference type="PANTHER" id="PTHR13691:SF5">
    <property type="entry name" value="LARGE RIBOSOMAL SUBUNIT PROTEIN UL2M"/>
    <property type="match status" value="1"/>
</dbReference>
<dbReference type="PANTHER" id="PTHR13691">
    <property type="entry name" value="RIBOSOMAL PROTEIN L2"/>
    <property type="match status" value="1"/>
</dbReference>
<dbReference type="Pfam" id="PF00181">
    <property type="entry name" value="Ribosomal_L2"/>
    <property type="match status" value="1"/>
</dbReference>
<dbReference type="Pfam" id="PF03947">
    <property type="entry name" value="Ribosomal_L2_C"/>
    <property type="match status" value="1"/>
</dbReference>
<dbReference type="PIRSF" id="PIRSF002158">
    <property type="entry name" value="Ribosomal_L2"/>
    <property type="match status" value="1"/>
</dbReference>
<dbReference type="SMART" id="SM01383">
    <property type="entry name" value="Ribosomal_L2"/>
    <property type="match status" value="1"/>
</dbReference>
<dbReference type="SMART" id="SM01382">
    <property type="entry name" value="Ribosomal_L2_C"/>
    <property type="match status" value="1"/>
</dbReference>
<dbReference type="SUPFAM" id="SSF50249">
    <property type="entry name" value="Nucleic acid-binding proteins"/>
    <property type="match status" value="1"/>
</dbReference>
<dbReference type="SUPFAM" id="SSF50104">
    <property type="entry name" value="Translation proteins SH3-like domain"/>
    <property type="match status" value="1"/>
</dbReference>
<dbReference type="PROSITE" id="PS00467">
    <property type="entry name" value="RIBOSOMAL_L2"/>
    <property type="match status" value="1"/>
</dbReference>
<name>RL2_STRZJ</name>
<accession>C1CC09</accession>
<reference key="1">
    <citation type="journal article" date="2010" name="Genome Biol.">
        <title>Structure and dynamics of the pan-genome of Streptococcus pneumoniae and closely related species.</title>
        <authorList>
            <person name="Donati C."/>
            <person name="Hiller N.L."/>
            <person name="Tettelin H."/>
            <person name="Muzzi A."/>
            <person name="Croucher N.J."/>
            <person name="Angiuoli S.V."/>
            <person name="Oggioni M."/>
            <person name="Dunning Hotopp J.C."/>
            <person name="Hu F.Z."/>
            <person name="Riley D.R."/>
            <person name="Covacci A."/>
            <person name="Mitchell T.J."/>
            <person name="Bentley S.D."/>
            <person name="Kilian M."/>
            <person name="Ehrlich G.D."/>
            <person name="Rappuoli R."/>
            <person name="Moxon E.R."/>
            <person name="Masignani V."/>
        </authorList>
    </citation>
    <scope>NUCLEOTIDE SEQUENCE [LARGE SCALE GENOMIC DNA]</scope>
    <source>
        <strain>JJA</strain>
    </source>
</reference>
<feature type="chain" id="PRO_1000165773" description="Large ribosomal subunit protein uL2">
    <location>
        <begin position="1"/>
        <end position="277"/>
    </location>
</feature>
<feature type="region of interest" description="Disordered" evidence="2">
    <location>
        <begin position="219"/>
        <end position="277"/>
    </location>
</feature>
<feature type="compositionally biased region" description="Basic and acidic residues" evidence="2">
    <location>
        <begin position="264"/>
        <end position="277"/>
    </location>
</feature>
<organism>
    <name type="scientific">Streptococcus pneumoniae (strain JJA)</name>
    <dbReference type="NCBI Taxonomy" id="488222"/>
    <lineage>
        <taxon>Bacteria</taxon>
        <taxon>Bacillati</taxon>
        <taxon>Bacillota</taxon>
        <taxon>Bacilli</taxon>
        <taxon>Lactobacillales</taxon>
        <taxon>Streptococcaceae</taxon>
        <taxon>Streptococcus</taxon>
    </lineage>
</organism>
<keyword id="KW-0687">Ribonucleoprotein</keyword>
<keyword id="KW-0689">Ribosomal protein</keyword>
<keyword id="KW-0694">RNA-binding</keyword>
<keyword id="KW-0699">rRNA-binding</keyword>
<evidence type="ECO:0000255" key="1">
    <source>
        <dbReference type="HAMAP-Rule" id="MF_01320"/>
    </source>
</evidence>
<evidence type="ECO:0000256" key="2">
    <source>
        <dbReference type="SAM" id="MobiDB-lite"/>
    </source>
</evidence>
<evidence type="ECO:0000305" key="3"/>
<proteinExistence type="inferred from homology"/>
<comment type="function">
    <text evidence="1">One of the primary rRNA binding proteins. Required for association of the 30S and 50S subunits to form the 70S ribosome, for tRNA binding and peptide bond formation. It has been suggested to have peptidyltransferase activity; this is somewhat controversial. Makes several contacts with the 16S rRNA in the 70S ribosome.</text>
</comment>
<comment type="subunit">
    <text evidence="1">Part of the 50S ribosomal subunit. Forms a bridge to the 30S subunit in the 70S ribosome.</text>
</comment>
<comment type="similarity">
    <text evidence="1">Belongs to the universal ribosomal protein uL2 family.</text>
</comment>
<gene>
    <name evidence="1" type="primary">rplB</name>
    <name type="ordered locus">SPJ_0222</name>
</gene>
<sequence length="277" mass="29920">MGIRVYKPTTNGRRNMTSLDFAEITTSTPEKSLLVALKSKAGRNNNGRITVRHQGGGHKRFYRLVDFKRNKDNVEAVVKTIEYDPNRSANIALVHYTDGVKAYIIAPKGLEVGQRIVSGPEADIKVGNALPLANIPVGTLIHNIELKPGRGGELVRAAGASAQVLGSEGKYVLVRLQSGEVRMILGTCRATVGVVGNEQHGLVNLGKAGRSRWKGIRPTVRGSVMNPNDHPHGGGEGKAPVGRKAPSTPWGKPALGLKTRNKKAKSDKLIVRRRNEK</sequence>
<protein>
    <recommendedName>
        <fullName evidence="1">Large ribosomal subunit protein uL2</fullName>
    </recommendedName>
    <alternativeName>
        <fullName evidence="3">50S ribosomal protein L2</fullName>
    </alternativeName>
</protein>